<sequence length="236" mass="25783">MRLHHLHVAYLDHKASSSSSSPAPPSISPSSIPGSAAFPAFSFKCLRPLAPKISLPEPRKMIAPPDFVVPRARNASKLLNYTVQVPAAGTTRWNPSAEQIKVLEMLYRGGMRTPNSVQIERITEELGKYGRIEGKNVFYWFQNHKARERQKQKRAALLTLSTLDPSLLPATANETKEAPEKKEKDVEDGLASCKRRCKAWGDGAGDGDAVVATEAAGGCTDEVTLELFPLHPQGKA</sequence>
<feature type="chain" id="PRO_0000308638" description="WUSCHEL-related homeobox 4">
    <location>
        <begin position="1"/>
        <end position="236"/>
    </location>
</feature>
<feature type="DNA-binding region" description="Homeobox; WUS-type" evidence="2">
    <location>
        <begin position="88"/>
        <end position="152"/>
    </location>
</feature>
<feature type="region of interest" description="Disordered" evidence="3">
    <location>
        <begin position="169"/>
        <end position="188"/>
    </location>
</feature>
<feature type="compositionally biased region" description="Basic and acidic residues" evidence="3">
    <location>
        <begin position="174"/>
        <end position="187"/>
    </location>
</feature>
<organism>
    <name type="scientific">Oryza sativa subsp. indica</name>
    <name type="common">Rice</name>
    <dbReference type="NCBI Taxonomy" id="39946"/>
    <lineage>
        <taxon>Eukaryota</taxon>
        <taxon>Viridiplantae</taxon>
        <taxon>Streptophyta</taxon>
        <taxon>Embryophyta</taxon>
        <taxon>Tracheophyta</taxon>
        <taxon>Spermatophyta</taxon>
        <taxon>Magnoliopsida</taxon>
        <taxon>Liliopsida</taxon>
        <taxon>Poales</taxon>
        <taxon>Poaceae</taxon>
        <taxon>BOP clade</taxon>
        <taxon>Oryzoideae</taxon>
        <taxon>Oryzeae</taxon>
        <taxon>Oryzinae</taxon>
        <taxon>Oryza</taxon>
        <taxon>Oryza sativa</taxon>
    </lineage>
</organism>
<keyword id="KW-0217">Developmental protein</keyword>
<keyword id="KW-0238">DNA-binding</keyword>
<keyword id="KW-0371">Homeobox</keyword>
<keyword id="KW-0539">Nucleus</keyword>
<keyword id="KW-1185">Reference proteome</keyword>
<keyword id="KW-0804">Transcription</keyword>
<keyword id="KW-0805">Transcription regulation</keyword>
<accession>Q25AM2</accession>
<accession>A2XYB0</accession>
<gene>
    <name type="primary">WOX4</name>
    <name type="ORF">H0212B02.3</name>
    <name type="ORF">OsI_017053</name>
</gene>
<name>WOX4_ORYSI</name>
<reference key="1">
    <citation type="journal article" date="2002" name="Nature">
        <title>Sequence and analysis of rice chromosome 4.</title>
        <authorList>
            <person name="Feng Q."/>
            <person name="Zhang Y."/>
            <person name="Hao P."/>
            <person name="Wang S."/>
            <person name="Fu G."/>
            <person name="Huang Y."/>
            <person name="Li Y."/>
            <person name="Zhu J."/>
            <person name="Liu Y."/>
            <person name="Hu X."/>
            <person name="Jia P."/>
            <person name="Zhang Y."/>
            <person name="Zhao Q."/>
            <person name="Ying K."/>
            <person name="Yu S."/>
            <person name="Tang Y."/>
            <person name="Weng Q."/>
            <person name="Zhang L."/>
            <person name="Lu Y."/>
            <person name="Mu J."/>
            <person name="Lu Y."/>
            <person name="Zhang L.S."/>
            <person name="Yu Z."/>
            <person name="Fan D."/>
            <person name="Liu X."/>
            <person name="Lu T."/>
            <person name="Li C."/>
            <person name="Wu Y."/>
            <person name="Sun T."/>
            <person name="Lei H."/>
            <person name="Li T."/>
            <person name="Hu H."/>
            <person name="Guan J."/>
            <person name="Wu M."/>
            <person name="Zhang R."/>
            <person name="Zhou B."/>
            <person name="Chen Z."/>
            <person name="Chen L."/>
            <person name="Jin Z."/>
            <person name="Wang R."/>
            <person name="Yin H."/>
            <person name="Cai Z."/>
            <person name="Ren S."/>
            <person name="Lv G."/>
            <person name="Gu W."/>
            <person name="Zhu G."/>
            <person name="Tu Y."/>
            <person name="Jia J."/>
            <person name="Zhang Y."/>
            <person name="Chen J."/>
            <person name="Kang H."/>
            <person name="Chen X."/>
            <person name="Shao C."/>
            <person name="Sun Y."/>
            <person name="Hu Q."/>
            <person name="Zhang X."/>
            <person name="Zhang W."/>
            <person name="Wang L."/>
            <person name="Ding C."/>
            <person name="Sheng H."/>
            <person name="Gu J."/>
            <person name="Chen S."/>
            <person name="Ni L."/>
            <person name="Zhu F."/>
            <person name="Chen W."/>
            <person name="Lan L."/>
            <person name="Lai Y."/>
            <person name="Cheng Z."/>
            <person name="Gu M."/>
            <person name="Jiang J."/>
            <person name="Li J."/>
            <person name="Hong G."/>
            <person name="Xue Y."/>
            <person name="Han B."/>
        </authorList>
    </citation>
    <scope>NUCLEOTIDE SEQUENCE [LARGE SCALE GENOMIC DNA]</scope>
    <source>
        <strain>cv. Guang-Lu-Ai No.4</strain>
    </source>
</reference>
<reference key="2">
    <citation type="journal article" date="2005" name="PLoS Biol.">
        <title>The genomes of Oryza sativa: a history of duplications.</title>
        <authorList>
            <person name="Yu J."/>
            <person name="Wang J."/>
            <person name="Lin W."/>
            <person name="Li S."/>
            <person name="Li H."/>
            <person name="Zhou J."/>
            <person name="Ni P."/>
            <person name="Dong W."/>
            <person name="Hu S."/>
            <person name="Zeng C."/>
            <person name="Zhang J."/>
            <person name="Zhang Y."/>
            <person name="Li R."/>
            <person name="Xu Z."/>
            <person name="Li S."/>
            <person name="Li X."/>
            <person name="Zheng H."/>
            <person name="Cong L."/>
            <person name="Lin L."/>
            <person name="Yin J."/>
            <person name="Geng J."/>
            <person name="Li G."/>
            <person name="Shi J."/>
            <person name="Liu J."/>
            <person name="Lv H."/>
            <person name="Li J."/>
            <person name="Wang J."/>
            <person name="Deng Y."/>
            <person name="Ran L."/>
            <person name="Shi X."/>
            <person name="Wang X."/>
            <person name="Wu Q."/>
            <person name="Li C."/>
            <person name="Ren X."/>
            <person name="Wang J."/>
            <person name="Wang X."/>
            <person name="Li D."/>
            <person name="Liu D."/>
            <person name="Zhang X."/>
            <person name="Ji Z."/>
            <person name="Zhao W."/>
            <person name="Sun Y."/>
            <person name="Zhang Z."/>
            <person name="Bao J."/>
            <person name="Han Y."/>
            <person name="Dong L."/>
            <person name="Ji J."/>
            <person name="Chen P."/>
            <person name="Wu S."/>
            <person name="Liu J."/>
            <person name="Xiao Y."/>
            <person name="Bu D."/>
            <person name="Tan J."/>
            <person name="Yang L."/>
            <person name="Ye C."/>
            <person name="Zhang J."/>
            <person name="Xu J."/>
            <person name="Zhou Y."/>
            <person name="Yu Y."/>
            <person name="Zhang B."/>
            <person name="Zhuang S."/>
            <person name="Wei H."/>
            <person name="Liu B."/>
            <person name="Lei M."/>
            <person name="Yu H."/>
            <person name="Li Y."/>
            <person name="Xu H."/>
            <person name="Wei S."/>
            <person name="He X."/>
            <person name="Fang L."/>
            <person name="Zhang Z."/>
            <person name="Zhang Y."/>
            <person name="Huang X."/>
            <person name="Su Z."/>
            <person name="Tong W."/>
            <person name="Li J."/>
            <person name="Tong Z."/>
            <person name="Li S."/>
            <person name="Ye J."/>
            <person name="Wang L."/>
            <person name="Fang L."/>
            <person name="Lei T."/>
            <person name="Chen C.-S."/>
            <person name="Chen H.-C."/>
            <person name="Xu Z."/>
            <person name="Li H."/>
            <person name="Huang H."/>
            <person name="Zhang F."/>
            <person name="Xu H."/>
            <person name="Li N."/>
            <person name="Zhao C."/>
            <person name="Li S."/>
            <person name="Dong L."/>
            <person name="Huang Y."/>
            <person name="Li L."/>
            <person name="Xi Y."/>
            <person name="Qi Q."/>
            <person name="Li W."/>
            <person name="Zhang B."/>
            <person name="Hu W."/>
            <person name="Zhang Y."/>
            <person name="Tian X."/>
            <person name="Jiao Y."/>
            <person name="Liang X."/>
            <person name="Jin J."/>
            <person name="Gao L."/>
            <person name="Zheng W."/>
            <person name="Hao B."/>
            <person name="Liu S.-M."/>
            <person name="Wang W."/>
            <person name="Yuan L."/>
            <person name="Cao M."/>
            <person name="McDermott J."/>
            <person name="Samudrala R."/>
            <person name="Wang J."/>
            <person name="Wong G.K.-S."/>
            <person name="Yang H."/>
        </authorList>
    </citation>
    <scope>NUCLEOTIDE SEQUENCE [LARGE SCALE GENOMIC DNA]</scope>
    <source>
        <strain>cv. 93-11</strain>
    </source>
</reference>
<reference key="3">
    <citation type="journal article" date="2007" name="Plant Physiol.">
        <title>A WUSCHEL-LIKE HOMEOBOX gene represses a YABBY gene expression required for rice leaf development.</title>
        <authorList>
            <person name="Dai M."/>
            <person name="Hu Y."/>
            <person name="Zhao Y."/>
            <person name="Liu H."/>
            <person name="Zhou D.-X."/>
        </authorList>
    </citation>
    <scope>NOMENCLATURE</scope>
</reference>
<proteinExistence type="inferred from homology"/>
<protein>
    <recommendedName>
        <fullName>WUSCHEL-related homeobox 4</fullName>
    </recommendedName>
    <alternativeName>
        <fullName>OsWOX4</fullName>
    </alternativeName>
</protein>
<comment type="function">
    <text evidence="1">Transcription factor which may be involved in developmental processes.</text>
</comment>
<comment type="subcellular location">
    <subcellularLocation>
        <location evidence="2">Nucleus</location>
    </subcellularLocation>
</comment>
<comment type="similarity">
    <text evidence="4">Belongs to the WUS homeobox family.</text>
</comment>
<evidence type="ECO:0000250" key="1"/>
<evidence type="ECO:0000255" key="2">
    <source>
        <dbReference type="PROSITE-ProRule" id="PRU00108"/>
    </source>
</evidence>
<evidence type="ECO:0000256" key="3">
    <source>
        <dbReference type="SAM" id="MobiDB-lite"/>
    </source>
</evidence>
<evidence type="ECO:0000305" key="4"/>
<dbReference type="EMBL" id="AL442007">
    <property type="protein sequence ID" value="CAH68258.1"/>
    <property type="molecule type" value="Genomic_DNA"/>
</dbReference>
<dbReference type="EMBL" id="CM000129">
    <property type="protein sequence ID" value="EAY95820.1"/>
    <property type="molecule type" value="Genomic_DNA"/>
</dbReference>
<dbReference type="SMR" id="Q25AM2"/>
<dbReference type="STRING" id="39946.Q25AM2"/>
<dbReference type="EnsemblPlants" id="BGIOSGA014217-TA">
    <property type="protein sequence ID" value="BGIOSGA014217-PA"/>
    <property type="gene ID" value="BGIOSGA014217"/>
</dbReference>
<dbReference type="EnsemblPlants" id="OsGoSa_04g0028380.01">
    <property type="protein sequence ID" value="OsGoSa_04g0028380.01"/>
    <property type="gene ID" value="OsGoSa_04g0028380"/>
</dbReference>
<dbReference type="EnsemblPlants" id="OsIR64_04g0028000.01">
    <property type="protein sequence ID" value="OsIR64_04g0028000.01"/>
    <property type="gene ID" value="OsIR64_04g0028000"/>
</dbReference>
<dbReference type="EnsemblPlants" id="OsKYG_04g0028270.01">
    <property type="protein sequence ID" value="OsKYG_04g0028270.01"/>
    <property type="gene ID" value="OsKYG_04g0028270"/>
</dbReference>
<dbReference type="EnsemblPlants" id="OsLaMu_04g0028950.01">
    <property type="protein sequence ID" value="OsLaMu_04g0028950.01"/>
    <property type="gene ID" value="OsLaMu_04g0028950"/>
</dbReference>
<dbReference type="EnsemblPlants" id="OsLima_04g0028440.01">
    <property type="protein sequence ID" value="OsLima_04g0028440.01"/>
    <property type="gene ID" value="OsLima_04g0028440"/>
</dbReference>
<dbReference type="EnsemblPlants" id="OsLiXu_04g0028980.01">
    <property type="protein sequence ID" value="OsLiXu_04g0028980.01"/>
    <property type="gene ID" value="OsLiXu_04g0028980"/>
</dbReference>
<dbReference type="EnsemblPlants" id="OsMH63_04G029340_01">
    <property type="protein sequence ID" value="OsMH63_04G029340_01"/>
    <property type="gene ID" value="OsMH63_04G029340"/>
</dbReference>
<dbReference type="EnsemblPlants" id="OsPr106_04g0029360.01">
    <property type="protein sequence ID" value="OsPr106_04g0029360.01"/>
    <property type="gene ID" value="OsPr106_04g0029360"/>
</dbReference>
<dbReference type="EnsemblPlants" id="OsZS97_04G029490_01">
    <property type="protein sequence ID" value="OsZS97_04G029490_01"/>
    <property type="gene ID" value="OsZS97_04G029490"/>
</dbReference>
<dbReference type="Gramene" id="BGIOSGA014217-TA">
    <property type="protein sequence ID" value="BGIOSGA014217-PA"/>
    <property type="gene ID" value="BGIOSGA014217"/>
</dbReference>
<dbReference type="Gramene" id="OsGoSa_04g0028380.01">
    <property type="protein sequence ID" value="OsGoSa_04g0028380.01"/>
    <property type="gene ID" value="OsGoSa_04g0028380"/>
</dbReference>
<dbReference type="Gramene" id="OsIR64_04g0028000.01">
    <property type="protein sequence ID" value="OsIR64_04g0028000.01"/>
    <property type="gene ID" value="OsIR64_04g0028000"/>
</dbReference>
<dbReference type="Gramene" id="OsKYG_04g0028270.01">
    <property type="protein sequence ID" value="OsKYG_04g0028270.01"/>
    <property type="gene ID" value="OsKYG_04g0028270"/>
</dbReference>
<dbReference type="Gramene" id="OsLaMu_04g0028950.01">
    <property type="protein sequence ID" value="OsLaMu_04g0028950.01"/>
    <property type="gene ID" value="OsLaMu_04g0028950"/>
</dbReference>
<dbReference type="Gramene" id="OsLima_04g0028440.01">
    <property type="protein sequence ID" value="OsLima_04g0028440.01"/>
    <property type="gene ID" value="OsLima_04g0028440"/>
</dbReference>
<dbReference type="Gramene" id="OsLiXu_04g0028980.01">
    <property type="protein sequence ID" value="OsLiXu_04g0028980.01"/>
    <property type="gene ID" value="OsLiXu_04g0028980"/>
</dbReference>
<dbReference type="Gramene" id="OsMH63_04G029340_01">
    <property type="protein sequence ID" value="OsMH63_04G029340_01"/>
    <property type="gene ID" value="OsMH63_04G029340"/>
</dbReference>
<dbReference type="Gramene" id="OsPr106_04g0029360.01">
    <property type="protein sequence ID" value="OsPr106_04g0029360.01"/>
    <property type="gene ID" value="OsPr106_04g0029360"/>
</dbReference>
<dbReference type="Gramene" id="OsZS97_04G029490_01">
    <property type="protein sequence ID" value="OsZS97_04G029490_01"/>
    <property type="gene ID" value="OsZS97_04G029490"/>
</dbReference>
<dbReference type="HOGENOM" id="CLU_106029_0_0_1"/>
<dbReference type="OMA" id="QYCLRPL"/>
<dbReference type="OrthoDB" id="768142at2759"/>
<dbReference type="Proteomes" id="UP000007015">
    <property type="component" value="Chromosome 4"/>
</dbReference>
<dbReference type="GO" id="GO:0005634">
    <property type="term" value="C:nucleus"/>
    <property type="evidence" value="ECO:0007669"/>
    <property type="project" value="UniProtKB-SubCell"/>
</dbReference>
<dbReference type="GO" id="GO:0003677">
    <property type="term" value="F:DNA binding"/>
    <property type="evidence" value="ECO:0007669"/>
    <property type="project" value="UniProtKB-KW"/>
</dbReference>
<dbReference type="GO" id="GO:0003700">
    <property type="term" value="F:DNA-binding transcription factor activity"/>
    <property type="evidence" value="ECO:0007669"/>
    <property type="project" value="InterPro"/>
</dbReference>
<dbReference type="GO" id="GO:0051301">
    <property type="term" value="P:cell division"/>
    <property type="evidence" value="ECO:0007669"/>
    <property type="project" value="EnsemblPlants"/>
</dbReference>
<dbReference type="GO" id="GO:0010087">
    <property type="term" value="P:phloem or xylem histogenesis"/>
    <property type="evidence" value="ECO:0007669"/>
    <property type="project" value="EnsemblPlants"/>
</dbReference>
<dbReference type="GO" id="GO:0010067">
    <property type="term" value="P:procambium histogenesis"/>
    <property type="evidence" value="ECO:0007669"/>
    <property type="project" value="EnsemblPlants"/>
</dbReference>
<dbReference type="GO" id="GO:0007165">
    <property type="term" value="P:signal transduction"/>
    <property type="evidence" value="ECO:0007669"/>
    <property type="project" value="EnsemblPlants"/>
</dbReference>
<dbReference type="CDD" id="cd00086">
    <property type="entry name" value="homeodomain"/>
    <property type="match status" value="1"/>
</dbReference>
<dbReference type="FunFam" id="1.10.10.60:FF:000146">
    <property type="entry name" value="WUSCHEL-related homeobox 4"/>
    <property type="match status" value="1"/>
</dbReference>
<dbReference type="Gene3D" id="1.10.10.60">
    <property type="entry name" value="Homeodomain-like"/>
    <property type="match status" value="1"/>
</dbReference>
<dbReference type="InterPro" id="IPR001356">
    <property type="entry name" value="HD"/>
</dbReference>
<dbReference type="InterPro" id="IPR009057">
    <property type="entry name" value="Homeodomain-like_sf"/>
</dbReference>
<dbReference type="InterPro" id="IPR044186">
    <property type="entry name" value="WOX4"/>
</dbReference>
<dbReference type="PANTHER" id="PTHR47716">
    <property type="entry name" value="WUSCHEL-RELATED HOMEOBOX 4"/>
    <property type="match status" value="1"/>
</dbReference>
<dbReference type="PANTHER" id="PTHR47716:SF1">
    <property type="entry name" value="WUSCHEL-RELATED HOMEOBOX 4"/>
    <property type="match status" value="1"/>
</dbReference>
<dbReference type="Pfam" id="PF00046">
    <property type="entry name" value="Homeodomain"/>
    <property type="match status" value="1"/>
</dbReference>
<dbReference type="SMART" id="SM00389">
    <property type="entry name" value="HOX"/>
    <property type="match status" value="1"/>
</dbReference>
<dbReference type="SUPFAM" id="SSF46689">
    <property type="entry name" value="Homeodomain-like"/>
    <property type="match status" value="1"/>
</dbReference>
<dbReference type="PROSITE" id="PS50071">
    <property type="entry name" value="HOMEOBOX_2"/>
    <property type="match status" value="1"/>
</dbReference>